<reference key="1">
    <citation type="journal article" date="2000" name="Mol. Endocrinol.">
        <title>The three subfamilies of leucine-rich repeat-containing G protein-coupled receptors (LGR): identification of LGR6 and LGR7 and the signaling mechanism for LGR7.</title>
        <authorList>
            <person name="Hsu S.Y."/>
            <person name="Kudo M."/>
            <person name="Chen T."/>
            <person name="Nakabayashi K."/>
            <person name="Bhalla A."/>
            <person name="van der Spek P.J."/>
            <person name="van Duin M."/>
            <person name="Hsueh A.J.W."/>
        </authorList>
    </citation>
    <scope>NUCLEOTIDE SEQUENCE [MRNA] (ISOFORM 1)</scope>
</reference>
<reference key="2">
    <citation type="journal article" date="2003" name="Genome Res.">
        <title>The secreted protein discovery initiative (SPDI), a large-scale effort to identify novel human secreted and transmembrane proteins: a bioinformatics assessment.</title>
        <authorList>
            <person name="Clark H.F."/>
            <person name="Gurney A.L."/>
            <person name="Abaya E."/>
            <person name="Baker K."/>
            <person name="Baldwin D.T."/>
            <person name="Brush J."/>
            <person name="Chen J."/>
            <person name="Chow B."/>
            <person name="Chui C."/>
            <person name="Crowley C."/>
            <person name="Currell B."/>
            <person name="Deuel B."/>
            <person name="Dowd P."/>
            <person name="Eaton D."/>
            <person name="Foster J.S."/>
            <person name="Grimaldi C."/>
            <person name="Gu Q."/>
            <person name="Hass P.E."/>
            <person name="Heldens S."/>
            <person name="Huang A."/>
            <person name="Kim H.S."/>
            <person name="Klimowski L."/>
            <person name="Jin Y."/>
            <person name="Johnson S."/>
            <person name="Lee J."/>
            <person name="Lewis L."/>
            <person name="Liao D."/>
            <person name="Mark M.R."/>
            <person name="Robbie E."/>
            <person name="Sanchez C."/>
            <person name="Schoenfeld J."/>
            <person name="Seshagiri S."/>
            <person name="Simmons L."/>
            <person name="Singh J."/>
            <person name="Smith V."/>
            <person name="Stinson J."/>
            <person name="Vagts A."/>
            <person name="Vandlen R.L."/>
            <person name="Watanabe C."/>
            <person name="Wieand D."/>
            <person name="Woods K."/>
            <person name="Xie M.-H."/>
            <person name="Yansura D.G."/>
            <person name="Yi S."/>
            <person name="Yu G."/>
            <person name="Yuan J."/>
            <person name="Zhang M."/>
            <person name="Zhang Z."/>
            <person name="Goddard A.D."/>
            <person name="Wood W.I."/>
            <person name="Godowski P.J."/>
            <person name="Gray A.M."/>
        </authorList>
    </citation>
    <scope>NUCLEOTIDE SEQUENCE [LARGE SCALE MRNA] (ISOFORM 2)</scope>
    <scope>VARIANT ALA-592</scope>
</reference>
<reference key="3">
    <citation type="journal article" date="2006" name="Nature">
        <title>The DNA sequence and biological annotation of human chromosome 1.</title>
        <authorList>
            <person name="Gregory S.G."/>
            <person name="Barlow K.F."/>
            <person name="McLay K.E."/>
            <person name="Kaul R."/>
            <person name="Swarbreck D."/>
            <person name="Dunham A."/>
            <person name="Scott C.E."/>
            <person name="Howe K.L."/>
            <person name="Woodfine K."/>
            <person name="Spencer C.C.A."/>
            <person name="Jones M.C."/>
            <person name="Gillson C."/>
            <person name="Searle S."/>
            <person name="Zhou Y."/>
            <person name="Kokocinski F."/>
            <person name="McDonald L."/>
            <person name="Evans R."/>
            <person name="Phillips K."/>
            <person name="Atkinson A."/>
            <person name="Cooper R."/>
            <person name="Jones C."/>
            <person name="Hall R.E."/>
            <person name="Andrews T.D."/>
            <person name="Lloyd C."/>
            <person name="Ainscough R."/>
            <person name="Almeida J.P."/>
            <person name="Ambrose K.D."/>
            <person name="Anderson F."/>
            <person name="Andrew R.W."/>
            <person name="Ashwell R.I.S."/>
            <person name="Aubin K."/>
            <person name="Babbage A.K."/>
            <person name="Bagguley C.L."/>
            <person name="Bailey J."/>
            <person name="Beasley H."/>
            <person name="Bethel G."/>
            <person name="Bird C.P."/>
            <person name="Bray-Allen S."/>
            <person name="Brown J.Y."/>
            <person name="Brown A.J."/>
            <person name="Buckley D."/>
            <person name="Burton J."/>
            <person name="Bye J."/>
            <person name="Carder C."/>
            <person name="Chapman J.C."/>
            <person name="Clark S.Y."/>
            <person name="Clarke G."/>
            <person name="Clee C."/>
            <person name="Cobley V."/>
            <person name="Collier R.E."/>
            <person name="Corby N."/>
            <person name="Coville G.J."/>
            <person name="Davies J."/>
            <person name="Deadman R."/>
            <person name="Dunn M."/>
            <person name="Earthrowl M."/>
            <person name="Ellington A.G."/>
            <person name="Errington H."/>
            <person name="Frankish A."/>
            <person name="Frankland J."/>
            <person name="French L."/>
            <person name="Garner P."/>
            <person name="Garnett J."/>
            <person name="Gay L."/>
            <person name="Ghori M.R.J."/>
            <person name="Gibson R."/>
            <person name="Gilby L.M."/>
            <person name="Gillett W."/>
            <person name="Glithero R.J."/>
            <person name="Grafham D.V."/>
            <person name="Griffiths C."/>
            <person name="Griffiths-Jones S."/>
            <person name="Grocock R."/>
            <person name="Hammond S."/>
            <person name="Harrison E.S.I."/>
            <person name="Hart E."/>
            <person name="Haugen E."/>
            <person name="Heath P.D."/>
            <person name="Holmes S."/>
            <person name="Holt K."/>
            <person name="Howden P.J."/>
            <person name="Hunt A.R."/>
            <person name="Hunt S.E."/>
            <person name="Hunter G."/>
            <person name="Isherwood J."/>
            <person name="James R."/>
            <person name="Johnson C."/>
            <person name="Johnson D."/>
            <person name="Joy A."/>
            <person name="Kay M."/>
            <person name="Kershaw J.K."/>
            <person name="Kibukawa M."/>
            <person name="Kimberley A.M."/>
            <person name="King A."/>
            <person name="Knights A.J."/>
            <person name="Lad H."/>
            <person name="Laird G."/>
            <person name="Lawlor S."/>
            <person name="Leongamornlert D.A."/>
            <person name="Lloyd D.M."/>
            <person name="Loveland J."/>
            <person name="Lovell J."/>
            <person name="Lush M.J."/>
            <person name="Lyne R."/>
            <person name="Martin S."/>
            <person name="Mashreghi-Mohammadi M."/>
            <person name="Matthews L."/>
            <person name="Matthews N.S.W."/>
            <person name="McLaren S."/>
            <person name="Milne S."/>
            <person name="Mistry S."/>
            <person name="Moore M.J.F."/>
            <person name="Nickerson T."/>
            <person name="O'Dell C.N."/>
            <person name="Oliver K."/>
            <person name="Palmeiri A."/>
            <person name="Palmer S.A."/>
            <person name="Parker A."/>
            <person name="Patel D."/>
            <person name="Pearce A.V."/>
            <person name="Peck A.I."/>
            <person name="Pelan S."/>
            <person name="Phelps K."/>
            <person name="Phillimore B.J."/>
            <person name="Plumb R."/>
            <person name="Rajan J."/>
            <person name="Raymond C."/>
            <person name="Rouse G."/>
            <person name="Saenphimmachak C."/>
            <person name="Sehra H.K."/>
            <person name="Sheridan E."/>
            <person name="Shownkeen R."/>
            <person name="Sims S."/>
            <person name="Skuce C.D."/>
            <person name="Smith M."/>
            <person name="Steward C."/>
            <person name="Subramanian S."/>
            <person name="Sycamore N."/>
            <person name="Tracey A."/>
            <person name="Tromans A."/>
            <person name="Van Helmond Z."/>
            <person name="Wall M."/>
            <person name="Wallis J.M."/>
            <person name="White S."/>
            <person name="Whitehead S.L."/>
            <person name="Wilkinson J.E."/>
            <person name="Willey D.L."/>
            <person name="Williams H."/>
            <person name="Wilming L."/>
            <person name="Wray P.W."/>
            <person name="Wu Z."/>
            <person name="Coulson A."/>
            <person name="Vaudin M."/>
            <person name="Sulston J.E."/>
            <person name="Durbin R.M."/>
            <person name="Hubbard T."/>
            <person name="Wooster R."/>
            <person name="Dunham I."/>
            <person name="Carter N.P."/>
            <person name="McVean G."/>
            <person name="Ross M.T."/>
            <person name="Harrow J."/>
            <person name="Olson M.V."/>
            <person name="Beck S."/>
            <person name="Rogers J."/>
            <person name="Bentley D.R."/>
        </authorList>
    </citation>
    <scope>NUCLEOTIDE SEQUENCE [LARGE SCALE GENOMIC DNA]</scope>
</reference>
<reference key="4">
    <citation type="journal article" date="2004" name="Genome Res.">
        <title>The status, quality, and expansion of the NIH full-length cDNA project: the Mammalian Gene Collection (MGC).</title>
        <authorList>
            <consortium name="The MGC Project Team"/>
        </authorList>
    </citation>
    <scope>NUCLEOTIDE SEQUENCE [LARGE SCALE MRNA] (ISOFORM 2)</scope>
</reference>
<reference key="5">
    <citation type="submission" date="2000-09" db="EMBL/GenBank/DDBJ databases">
        <title>A member of the G-protein coupled receptor family.</title>
        <authorList>
            <person name="Okaze H."/>
            <person name="Hayashi A."/>
            <person name="Kozuma S."/>
            <person name="Saito T."/>
        </authorList>
    </citation>
    <scope>NUCLEOTIDE SEQUENCE [MRNA] OF 40-967 (ISOFORM 3)</scope>
    <scope>VARIANT ALA-592</scope>
</reference>
<reference key="6">
    <citation type="journal article" date="2002" name="FEBS Lett.">
        <title>Identification of G protein-coupled receptor genes from the human genome sequence.</title>
        <authorList>
            <person name="Takeda S."/>
            <person name="Kadowaki S."/>
            <person name="Haga T."/>
            <person name="Takaesu H."/>
            <person name="Mitaku S."/>
        </authorList>
    </citation>
    <scope>NUCLEOTIDE SEQUENCE [LARGE SCALE GENOMIC DNA] OF 545-967</scope>
</reference>
<reference key="7">
    <citation type="journal article" date="2004" name="Nat. Genet.">
        <title>Complete sequencing and characterization of 21,243 full-length human cDNAs.</title>
        <authorList>
            <person name="Ota T."/>
            <person name="Suzuki Y."/>
            <person name="Nishikawa T."/>
            <person name="Otsuki T."/>
            <person name="Sugiyama T."/>
            <person name="Irie R."/>
            <person name="Wakamatsu A."/>
            <person name="Hayashi K."/>
            <person name="Sato H."/>
            <person name="Nagai K."/>
            <person name="Kimura K."/>
            <person name="Makita H."/>
            <person name="Sekine M."/>
            <person name="Obayashi M."/>
            <person name="Nishi T."/>
            <person name="Shibahara T."/>
            <person name="Tanaka T."/>
            <person name="Ishii S."/>
            <person name="Yamamoto J."/>
            <person name="Saito K."/>
            <person name="Kawai Y."/>
            <person name="Isono Y."/>
            <person name="Nakamura Y."/>
            <person name="Nagahari K."/>
            <person name="Murakami K."/>
            <person name="Yasuda T."/>
            <person name="Iwayanagi T."/>
            <person name="Wagatsuma M."/>
            <person name="Shiratori A."/>
            <person name="Sudo H."/>
            <person name="Hosoiri T."/>
            <person name="Kaku Y."/>
            <person name="Kodaira H."/>
            <person name="Kondo H."/>
            <person name="Sugawara M."/>
            <person name="Takahashi M."/>
            <person name="Kanda K."/>
            <person name="Yokoi T."/>
            <person name="Furuya T."/>
            <person name="Kikkawa E."/>
            <person name="Omura Y."/>
            <person name="Abe K."/>
            <person name="Kamihara K."/>
            <person name="Katsuta N."/>
            <person name="Sato K."/>
            <person name="Tanikawa M."/>
            <person name="Yamazaki M."/>
            <person name="Ninomiya K."/>
            <person name="Ishibashi T."/>
            <person name="Yamashita H."/>
            <person name="Murakawa K."/>
            <person name="Fujimori K."/>
            <person name="Tanai H."/>
            <person name="Kimata M."/>
            <person name="Watanabe M."/>
            <person name="Hiraoka S."/>
            <person name="Chiba Y."/>
            <person name="Ishida S."/>
            <person name="Ono Y."/>
            <person name="Takiguchi S."/>
            <person name="Watanabe S."/>
            <person name="Yosida M."/>
            <person name="Hotuta T."/>
            <person name="Kusano J."/>
            <person name="Kanehori K."/>
            <person name="Takahashi-Fujii A."/>
            <person name="Hara H."/>
            <person name="Tanase T.-O."/>
            <person name="Nomura Y."/>
            <person name="Togiya S."/>
            <person name="Komai F."/>
            <person name="Hara R."/>
            <person name="Takeuchi K."/>
            <person name="Arita M."/>
            <person name="Imose N."/>
            <person name="Musashino K."/>
            <person name="Yuuki H."/>
            <person name="Oshima A."/>
            <person name="Sasaki N."/>
            <person name="Aotsuka S."/>
            <person name="Yoshikawa Y."/>
            <person name="Matsunawa H."/>
            <person name="Ichihara T."/>
            <person name="Shiohata N."/>
            <person name="Sano S."/>
            <person name="Moriya S."/>
            <person name="Momiyama H."/>
            <person name="Satoh N."/>
            <person name="Takami S."/>
            <person name="Terashima Y."/>
            <person name="Suzuki O."/>
            <person name="Nakagawa S."/>
            <person name="Senoh A."/>
            <person name="Mizoguchi H."/>
            <person name="Goto Y."/>
            <person name="Shimizu F."/>
            <person name="Wakebe H."/>
            <person name="Hishigaki H."/>
            <person name="Watanabe T."/>
            <person name="Sugiyama A."/>
            <person name="Takemoto M."/>
            <person name="Kawakami B."/>
            <person name="Yamazaki M."/>
            <person name="Watanabe K."/>
            <person name="Kumagai A."/>
            <person name="Itakura S."/>
            <person name="Fukuzumi Y."/>
            <person name="Fujimori Y."/>
            <person name="Komiyama M."/>
            <person name="Tashiro H."/>
            <person name="Tanigami A."/>
            <person name="Fujiwara T."/>
            <person name="Ono T."/>
            <person name="Yamada K."/>
            <person name="Fujii Y."/>
            <person name="Ozaki K."/>
            <person name="Hirao M."/>
            <person name="Ohmori Y."/>
            <person name="Kawabata A."/>
            <person name="Hikiji T."/>
            <person name="Kobatake N."/>
            <person name="Inagaki H."/>
            <person name="Ikema Y."/>
            <person name="Okamoto S."/>
            <person name="Okitani R."/>
            <person name="Kawakami T."/>
            <person name="Noguchi S."/>
            <person name="Itoh T."/>
            <person name="Shigeta K."/>
            <person name="Senba T."/>
            <person name="Matsumura K."/>
            <person name="Nakajima Y."/>
            <person name="Mizuno T."/>
            <person name="Morinaga M."/>
            <person name="Sasaki M."/>
            <person name="Togashi T."/>
            <person name="Oyama M."/>
            <person name="Hata H."/>
            <person name="Watanabe M."/>
            <person name="Komatsu T."/>
            <person name="Mizushima-Sugano J."/>
            <person name="Satoh T."/>
            <person name="Shirai Y."/>
            <person name="Takahashi Y."/>
            <person name="Nakagawa K."/>
            <person name="Okumura K."/>
            <person name="Nagase T."/>
            <person name="Nomura N."/>
            <person name="Kikuchi H."/>
            <person name="Masuho Y."/>
            <person name="Yamashita R."/>
            <person name="Nakai K."/>
            <person name="Yada T."/>
            <person name="Nakamura Y."/>
            <person name="Ohara O."/>
            <person name="Isogai T."/>
            <person name="Sugano S."/>
        </authorList>
    </citation>
    <scope>NUCLEOTIDE SEQUENCE [LARGE SCALE MRNA] OF 570-967</scope>
    <source>
        <tissue>Mammary gland</tissue>
    </source>
</reference>
<reference key="8">
    <citation type="journal article" date="2011" name="Nature">
        <title>Lgr5 homologues associate with Wnt receptors and mediate R-spondin signalling.</title>
        <authorList>
            <person name="de Lau W."/>
            <person name="Barker N."/>
            <person name="Low T.Y."/>
            <person name="Koo B.K."/>
            <person name="Li V.S."/>
            <person name="Teunissen H."/>
            <person name="Kujala P."/>
            <person name="Haegebarth A."/>
            <person name="Peters P.J."/>
            <person name="van de Wetering M."/>
            <person name="Stange D.E."/>
            <person name="van Es J.E."/>
            <person name="Guardavaccaro D."/>
            <person name="Schasfoort R.B."/>
            <person name="Mohri Y."/>
            <person name="Nishimori K."/>
            <person name="Mohammed S."/>
            <person name="Heck A.J."/>
            <person name="Clevers H."/>
        </authorList>
    </citation>
    <scope>FUNCTION</scope>
    <scope>INTERACTION WITH RSPO1; RSPO2; RSPO3 AND RSPO4</scope>
</reference>
<reference key="9">
    <citation type="journal article" date="2012" name="PLoS ONE">
        <title>LGR6 is a high affinity receptor of R-spondins and potentially functions as a tumor suppressor.</title>
        <authorList>
            <person name="Gong X."/>
            <person name="Carmon K.S."/>
            <person name="Lin Q."/>
            <person name="Thomas A."/>
            <person name="Yi J."/>
            <person name="Liu Q."/>
        </authorList>
    </citation>
    <scope>FUNCTION</scope>
    <scope>INTERACTION WITH RSPO1; RSPO2 AND RSPO3</scope>
    <scope>SUBCELLULAR LOCATION</scope>
    <scope>CHARACTERIZATION OF VARIANTS CYS-725 AND HIS-928</scope>
</reference>
<reference key="10">
    <citation type="journal article" date="2006" name="Science">
        <title>The consensus coding sequences of human breast and colorectal cancers.</title>
        <authorList>
            <person name="Sjoeblom T."/>
            <person name="Jones S."/>
            <person name="Wood L.D."/>
            <person name="Parsons D.W."/>
            <person name="Lin J."/>
            <person name="Barber T.D."/>
            <person name="Mandelker D."/>
            <person name="Leary R.J."/>
            <person name="Ptak J."/>
            <person name="Silliman N."/>
            <person name="Szabo S."/>
            <person name="Buckhaults P."/>
            <person name="Farrell C."/>
            <person name="Meeh P."/>
            <person name="Markowitz S.D."/>
            <person name="Willis J."/>
            <person name="Dawson D."/>
            <person name="Willson J.K.V."/>
            <person name="Gazdar A.F."/>
            <person name="Hartigan J."/>
            <person name="Wu L."/>
            <person name="Liu C."/>
            <person name="Parmigiani G."/>
            <person name="Park B.H."/>
            <person name="Bachman K.E."/>
            <person name="Papadopoulos N."/>
            <person name="Vogelstein B."/>
            <person name="Kinzler K.W."/>
            <person name="Velculescu V.E."/>
        </authorList>
    </citation>
    <scope>VARIANTS [LARGE SCALE ANALYSIS] CYS-725 AND HIS-928</scope>
</reference>
<evidence type="ECO:0000250" key="1"/>
<evidence type="ECO:0000255" key="2"/>
<evidence type="ECO:0000269" key="3">
    <source>
    </source>
</evidence>
<evidence type="ECO:0000269" key="4">
    <source>
    </source>
</evidence>
<evidence type="ECO:0000269" key="5">
    <source>
    </source>
</evidence>
<evidence type="ECO:0000269" key="6">
    <source>
    </source>
</evidence>
<evidence type="ECO:0000269" key="7">
    <source ref="5"/>
</evidence>
<evidence type="ECO:0000303" key="8">
    <source>
    </source>
</evidence>
<evidence type="ECO:0000303" key="9">
    <source>
    </source>
</evidence>
<evidence type="ECO:0000303" key="10">
    <source>
    </source>
</evidence>
<evidence type="ECO:0000305" key="11"/>
<gene>
    <name type="primary">LGR6</name>
    <name type="ORF">UNQ6427/PRO21331</name>
    <name type="ORF">VTS20631</name>
</gene>
<keyword id="KW-0025">Alternative splicing</keyword>
<keyword id="KW-1003">Cell membrane</keyword>
<keyword id="KW-1015">Disulfide bond</keyword>
<keyword id="KW-0297">G-protein coupled receptor</keyword>
<keyword id="KW-0325">Glycoprotein</keyword>
<keyword id="KW-0433">Leucine-rich repeat</keyword>
<keyword id="KW-0472">Membrane</keyword>
<keyword id="KW-1267">Proteomics identification</keyword>
<keyword id="KW-0675">Receptor</keyword>
<keyword id="KW-1185">Reference proteome</keyword>
<keyword id="KW-0677">Repeat</keyword>
<keyword id="KW-0732">Signal</keyword>
<keyword id="KW-0807">Transducer</keyword>
<keyword id="KW-0812">Transmembrane</keyword>
<keyword id="KW-1133">Transmembrane helix</keyword>
<keyword id="KW-0043">Tumor suppressor</keyword>
<keyword id="KW-0879">Wnt signaling pathway</keyword>
<accession>Q9HBX8</accession>
<accession>Q5T509</accession>
<accession>Q5T512</accession>
<accession>Q6UY15</accession>
<accession>Q86VU0</accession>
<accession>Q96K69</accession>
<accession>Q9BYD7</accession>
<sequence>MPSPPGLRALWLCAALCASRRAGGAPQPGPGPTACPAPCHCQEDGIMLSADCSELGLSAVPGDLDPLTAYLDLSMNNLTELQPGLFHHLRFLEELRLSGNHLSHIPGQAFSGLYSLKILMLQNNQLGGIPAEALWELPSLQSLRLDANLISLVPERSFEGLSSLRHLWLDDNALTEIPVRALNNLPALQAMTLALNRISHIPDYAFQNLTSLVVLHLHNNRIQHLGTHSFEGLHNLETLDLNYNKLQEFPVAIRTLGRLQELGFHNNNIKAIPEKAFMGNPLLQTIHFYDNPIQFVGRSAFQYLPKLHTLSLNGAMDIQEFPDLKGTTSLEILTLTRAGIRLLPSGMCQQLPRLRVLELSHNQIEELPSLHRCQKLEEIGLQHNRIWEIGADTFSQLSSLQALDLSWNAIRSIHPEAFSTLHSLVKLDLTDNQLTTLPLAGLGGLMHLKLKGNLALSQAFSKDSFPKLRILEVPYAYQCCPYGMCASFFKASGQWEAEDLHLDDEESSKRPLGLLARQAENHYDQDLDELQLEMEDSKPHPSVQCSPTPGPFKPCEYLFESWGIRLAVWAIVLLSVLCNGLVLLTVFAGGPVPLPPVKFVVGAIAGANTLTGISCGLLASVDALTFGQFSEYGARWETGLGCRATGFLAVLGSEASVLLLTLAAVQCSVSVSCVRAYGKSPSLGSVRAGVLGCLALAGLAAALPLASVGEYGASPLCLPYAPPEGQPAALGFTVALVMMNSFCFLVVAGAYIKLYCDLPRGDFEAVWDCAMVRHVAWLIFADGLLYCPVAFLSFASMLGLFPVTPEAVKSVLLVVLPLPACLNPLLYLLFNPHFRDDLRRLRPRAGDSGPLAYAAAGELEKSSCDSTQALVAFSDVDLILEASEAGRPPGLETYGFPSVTLISCQQPGAPRLEGSHCVEPEGNHFGNPQPSMDGELLLRAEGSTPAGGGLSGGGGFQPSGLAFASHV</sequence>
<proteinExistence type="evidence at protein level"/>
<feature type="signal peptide" evidence="2">
    <location>
        <begin position="1"/>
        <end position="24"/>
    </location>
</feature>
<feature type="chain" id="PRO_0000069699" description="Leucine-rich repeat-containing G-protein coupled receptor 6">
    <location>
        <begin position="25"/>
        <end position="967"/>
    </location>
</feature>
<feature type="topological domain" description="Extracellular" evidence="2">
    <location>
        <begin position="25"/>
        <end position="567"/>
    </location>
</feature>
<feature type="transmembrane region" description="Helical; Name=1" evidence="2">
    <location>
        <begin position="568"/>
        <end position="588"/>
    </location>
</feature>
<feature type="topological domain" description="Cytoplasmic" evidence="2">
    <location>
        <begin position="589"/>
        <end position="598"/>
    </location>
</feature>
<feature type="transmembrane region" description="Helical; Name=2" evidence="2">
    <location>
        <begin position="599"/>
        <end position="619"/>
    </location>
</feature>
<feature type="topological domain" description="Extracellular" evidence="2">
    <location>
        <begin position="620"/>
        <end position="644"/>
    </location>
</feature>
<feature type="transmembrane region" description="Helical; Name=3" evidence="2">
    <location>
        <begin position="645"/>
        <end position="665"/>
    </location>
</feature>
<feature type="topological domain" description="Cytoplasmic" evidence="2">
    <location>
        <begin position="666"/>
        <end position="687"/>
    </location>
</feature>
<feature type="transmembrane region" description="Helical; Name=4" evidence="2">
    <location>
        <begin position="688"/>
        <end position="708"/>
    </location>
</feature>
<feature type="topological domain" description="Extracellular" evidence="2">
    <location>
        <begin position="709"/>
        <end position="727"/>
    </location>
</feature>
<feature type="transmembrane region" description="Helical; Name=5" evidence="2">
    <location>
        <begin position="728"/>
        <end position="748"/>
    </location>
</feature>
<feature type="topological domain" description="Cytoplasmic" evidence="2">
    <location>
        <begin position="749"/>
        <end position="774"/>
    </location>
</feature>
<feature type="transmembrane region" description="Helical; Name=6" evidence="2">
    <location>
        <begin position="775"/>
        <end position="795"/>
    </location>
</feature>
<feature type="topological domain" description="Extracellular" evidence="2">
    <location>
        <begin position="796"/>
        <end position="809"/>
    </location>
</feature>
<feature type="transmembrane region" description="Helical; Name=7" evidence="2">
    <location>
        <begin position="810"/>
        <end position="830"/>
    </location>
</feature>
<feature type="topological domain" description="Cytoplasmic" evidence="2">
    <location>
        <begin position="831"/>
        <end position="967"/>
    </location>
</feature>
<feature type="domain" description="LRRNT">
    <location>
        <begin position="26"/>
        <end position="66"/>
    </location>
</feature>
<feature type="repeat" description="LRR 1">
    <location>
        <begin position="91"/>
        <end position="112"/>
    </location>
</feature>
<feature type="repeat" description="LRR 2">
    <location>
        <begin position="115"/>
        <end position="136"/>
    </location>
</feature>
<feature type="repeat" description="LRR 3">
    <location>
        <begin position="139"/>
        <end position="160"/>
    </location>
</feature>
<feature type="repeat" description="LRR 4">
    <location>
        <begin position="163"/>
        <end position="186"/>
    </location>
</feature>
<feature type="repeat" description="LRR 5">
    <location>
        <begin position="187"/>
        <end position="208"/>
    </location>
</feature>
<feature type="repeat" description="LRR 6">
    <location>
        <begin position="211"/>
        <end position="232"/>
    </location>
</feature>
<feature type="repeat" description="LRR 7">
    <location>
        <begin position="235"/>
        <end position="256"/>
    </location>
</feature>
<feature type="repeat" description="LRR 8">
    <location>
        <begin position="258"/>
        <end position="279"/>
    </location>
</feature>
<feature type="repeat" description="LRR 9">
    <location>
        <begin position="282"/>
        <end position="303"/>
    </location>
</feature>
<feature type="repeat" description="LRR 10">
    <location>
        <begin position="306"/>
        <end position="328"/>
    </location>
</feature>
<feature type="repeat" description="LRR 11">
    <location>
        <begin position="329"/>
        <end position="350"/>
    </location>
</feature>
<feature type="repeat" description="LRR 12">
    <location>
        <begin position="353"/>
        <end position="374"/>
    </location>
</feature>
<feature type="repeat" description="LRR 13">
    <location>
        <begin position="375"/>
        <end position="396"/>
    </location>
</feature>
<feature type="repeat" description="LRR 14">
    <location>
        <begin position="399"/>
        <end position="420"/>
    </location>
</feature>
<feature type="repeat" description="LRR 15">
    <location>
        <begin position="423"/>
        <end position="443"/>
    </location>
</feature>
<feature type="glycosylation site" description="N-linked (GlcNAc...) asparagine" evidence="2">
    <location>
        <position position="77"/>
    </location>
</feature>
<feature type="glycosylation site" description="N-linked (GlcNAc...) asparagine" evidence="2">
    <location>
        <position position="208"/>
    </location>
</feature>
<feature type="disulfide bond" evidence="1">
    <location>
        <begin position="642"/>
        <end position="717"/>
    </location>
</feature>
<feature type="splice variant" id="VSP_028006" description="In isoform 1." evidence="8">
    <original>MPSPPGLRALWLCAALCASRRAGGAPQPGPGPTACPAPCHCQEDGIMLSADCSELGLSAVPGDLDPLTAYL</original>
    <variation>MRLEGEGRSARAGQNLSRAGSARRGAPR</variation>
    <location>
        <begin position="1"/>
        <end position="71"/>
    </location>
</feature>
<feature type="splice variant" id="VSP_013596" description="In isoform 2." evidence="9 10">
    <original>MPSPPGLRALWLCAALCASRRAGGAPQPGPGPTACPAPCHCQEDGIMLSADCSELGLSAVPGDLDPLTAYL</original>
    <variation>MGRPRLTLVCQVSIIISAR</variation>
    <location>
        <begin position="1"/>
        <end position="71"/>
    </location>
</feature>
<feature type="splice variant" id="VSP_028007" description="In isoform 1." evidence="8">
    <location>
        <begin position="144"/>
        <end position="239"/>
    </location>
</feature>
<feature type="sequence variant" id="VAR_049413" description="In dbSNP:rs7553800.">
    <original>N</original>
    <variation>K</variation>
    <location>
        <position position="267"/>
    </location>
</feature>
<feature type="sequence variant" id="VAR_033479" description="In dbSNP:rs6668765.">
    <original>A</original>
    <variation>S</variation>
    <location>
        <position position="516"/>
    </location>
</feature>
<feature type="sequence variant" id="VAR_059324" description="In dbSNP:rs788795." evidence="3 7">
    <original>V</original>
    <variation>A</variation>
    <location>
        <position position="592"/>
    </location>
</feature>
<feature type="sequence variant" id="VAR_035762" description="In a colorectal cancer sample; somatic mutation; no effect Wnt signlaing upon RSPO1-binding." evidence="4 6">
    <original>G</original>
    <variation>C</variation>
    <location>
        <position position="725"/>
    </location>
</feature>
<feature type="sequence variant" id="VAR_035763" description="In a colorectal cancer sample; somatic mutation; no effect Wnt signlaing upon RSPO1-binding." evidence="4 6">
    <original>P</original>
    <variation>H</variation>
    <location>
        <position position="928"/>
    </location>
</feature>
<feature type="sequence conflict" description="In Ref. 6; BAB89329." evidence="11" ref="6">
    <original>CSPTP</original>
    <variation>MISPT</variation>
    <location>
        <begin position="545"/>
        <end position="549"/>
    </location>
</feature>
<feature type="sequence conflict" description="In Ref. 7; BAB55071." evidence="11" ref="7">
    <original>W</original>
    <variation>R</variation>
    <location>
        <position position="767"/>
    </location>
</feature>
<feature type="sequence conflict" description="In Ref. 1; AAG17168." evidence="11" ref="1">
    <original>FASHV</original>
    <variation>LLHTY</variation>
    <location>
        <begin position="963"/>
        <end position="967"/>
    </location>
</feature>
<protein>
    <recommendedName>
        <fullName>Leucine-rich repeat-containing G-protein coupled receptor 6</fullName>
    </recommendedName>
</protein>
<dbReference type="EMBL" id="AF190501">
    <property type="protein sequence ID" value="AAG17168.1"/>
    <property type="molecule type" value="mRNA"/>
</dbReference>
<dbReference type="EMBL" id="AY358119">
    <property type="protein sequence ID" value="AAQ88486.1"/>
    <property type="molecule type" value="mRNA"/>
</dbReference>
<dbReference type="EMBL" id="AL356953">
    <property type="status" value="NOT_ANNOTATED_CDS"/>
    <property type="molecule type" value="Genomic_DNA"/>
</dbReference>
<dbReference type="EMBL" id="BC047905">
    <property type="protein sequence ID" value="AAH47905.2"/>
    <property type="molecule type" value="mRNA"/>
</dbReference>
<dbReference type="EMBL" id="AB049405">
    <property type="protein sequence ID" value="BAB39854.1"/>
    <property type="molecule type" value="mRNA"/>
</dbReference>
<dbReference type="EMBL" id="AB083616">
    <property type="protein sequence ID" value="BAB89329.1"/>
    <property type="molecule type" value="Genomic_DNA"/>
</dbReference>
<dbReference type="EMBL" id="AK027377">
    <property type="protein sequence ID" value="BAB55071.1"/>
    <property type="status" value="ALT_INIT"/>
    <property type="molecule type" value="mRNA"/>
</dbReference>
<dbReference type="CCDS" id="CCDS1424.1">
    <molecule id="Q9HBX8-2"/>
</dbReference>
<dbReference type="CCDS" id="CCDS30971.1">
    <molecule id="Q9HBX8-3"/>
</dbReference>
<dbReference type="CCDS" id="CCDS30972.1">
    <molecule id="Q9HBX8-1"/>
</dbReference>
<dbReference type="RefSeq" id="NP_001017403.1">
    <molecule id="Q9HBX8-3"/>
    <property type="nucleotide sequence ID" value="NM_001017403.2"/>
</dbReference>
<dbReference type="RefSeq" id="NP_001017404.1">
    <molecule id="Q9HBX8-1"/>
    <property type="nucleotide sequence ID" value="NM_001017404.2"/>
</dbReference>
<dbReference type="RefSeq" id="NP_067649.2">
    <molecule id="Q9HBX8-2"/>
    <property type="nucleotide sequence ID" value="NM_021636.3"/>
</dbReference>
<dbReference type="SMR" id="Q9HBX8"/>
<dbReference type="BioGRID" id="121893">
    <property type="interactions" value="5"/>
</dbReference>
<dbReference type="CORUM" id="Q9HBX8"/>
<dbReference type="FunCoup" id="Q9HBX8">
    <property type="interactions" value="242"/>
</dbReference>
<dbReference type="STRING" id="9606.ENSP00000356247"/>
<dbReference type="GuidetoPHARMACOLOGY" id="149"/>
<dbReference type="GlyCosmos" id="Q9HBX8">
    <property type="glycosylation" value="2 sites, No reported glycans"/>
</dbReference>
<dbReference type="GlyGen" id="Q9HBX8">
    <property type="glycosylation" value="5 sites"/>
</dbReference>
<dbReference type="iPTMnet" id="Q9HBX8"/>
<dbReference type="PhosphoSitePlus" id="Q9HBX8"/>
<dbReference type="BioMuta" id="LGR6"/>
<dbReference type="DMDM" id="158519993"/>
<dbReference type="MassIVE" id="Q9HBX8"/>
<dbReference type="PaxDb" id="9606-ENSP00000356247"/>
<dbReference type="PeptideAtlas" id="Q9HBX8"/>
<dbReference type="ProteomicsDB" id="81605">
    <molecule id="Q9HBX8-1"/>
</dbReference>
<dbReference type="Antibodypedia" id="34525">
    <property type="antibodies" value="368 antibodies from 33 providers"/>
</dbReference>
<dbReference type="DNASU" id="59352"/>
<dbReference type="Ensembl" id="ENST00000255432.11">
    <molecule id="Q9HBX8-2"/>
    <property type="protein sequence ID" value="ENSP00000255432.7"/>
    <property type="gene ID" value="ENSG00000133067.18"/>
</dbReference>
<dbReference type="Ensembl" id="ENST00000367278.8">
    <molecule id="Q9HBX8-3"/>
    <property type="protein sequence ID" value="ENSP00000356247.3"/>
    <property type="gene ID" value="ENSG00000133067.18"/>
</dbReference>
<dbReference type="Ensembl" id="ENST00000439764.2">
    <molecule id="Q9HBX8-1"/>
    <property type="protein sequence ID" value="ENSP00000387869.2"/>
    <property type="gene ID" value="ENSG00000133067.18"/>
</dbReference>
<dbReference type="GeneID" id="59352"/>
<dbReference type="KEGG" id="hsa:59352"/>
<dbReference type="MANE-Select" id="ENST00000367278.8">
    <property type="protein sequence ID" value="ENSP00000356247.3"/>
    <property type="RefSeq nucleotide sequence ID" value="NM_001017403.2"/>
    <property type="RefSeq protein sequence ID" value="NP_001017403.1"/>
</dbReference>
<dbReference type="UCSC" id="uc001gxu.4">
    <molecule id="Q9HBX8-3"/>
    <property type="organism name" value="human"/>
</dbReference>
<dbReference type="AGR" id="HGNC:19719"/>
<dbReference type="CTD" id="59352"/>
<dbReference type="DisGeNET" id="59352"/>
<dbReference type="GeneCards" id="LGR6"/>
<dbReference type="HGNC" id="HGNC:19719">
    <property type="gene designation" value="LGR6"/>
</dbReference>
<dbReference type="HPA" id="ENSG00000133067">
    <property type="expression patterns" value="Tissue enhanced (pituitary)"/>
</dbReference>
<dbReference type="MIM" id="606653">
    <property type="type" value="gene"/>
</dbReference>
<dbReference type="neXtProt" id="NX_Q9HBX8"/>
<dbReference type="OpenTargets" id="ENSG00000133067"/>
<dbReference type="PharmGKB" id="PA134927114"/>
<dbReference type="VEuPathDB" id="HostDB:ENSG00000133067"/>
<dbReference type="eggNOG" id="KOG0619">
    <property type="taxonomic scope" value="Eukaryota"/>
</dbReference>
<dbReference type="eggNOG" id="KOG2087">
    <property type="taxonomic scope" value="Eukaryota"/>
</dbReference>
<dbReference type="GeneTree" id="ENSGT00940000159939"/>
<dbReference type="HOGENOM" id="CLU_006843_0_0_1"/>
<dbReference type="InParanoid" id="Q9HBX8"/>
<dbReference type="OrthoDB" id="1883493at2759"/>
<dbReference type="PAN-GO" id="Q9HBX8">
    <property type="GO annotations" value="4 GO annotations based on evolutionary models"/>
</dbReference>
<dbReference type="PhylomeDB" id="Q9HBX8"/>
<dbReference type="TreeFam" id="TF316814"/>
<dbReference type="PathwayCommons" id="Q9HBX8"/>
<dbReference type="Reactome" id="R-HSA-4641263">
    <property type="pathway name" value="Regulation of FZD by ubiquitination"/>
</dbReference>
<dbReference type="BioGRID-ORCS" id="59352">
    <property type="hits" value="12 hits in 1138 CRISPR screens"/>
</dbReference>
<dbReference type="GeneWiki" id="LGR6"/>
<dbReference type="GenomeRNAi" id="59352"/>
<dbReference type="Pharos" id="Q9HBX8">
    <property type="development level" value="Tbio"/>
</dbReference>
<dbReference type="PRO" id="PR:Q9HBX8"/>
<dbReference type="Proteomes" id="UP000005640">
    <property type="component" value="Chromosome 1"/>
</dbReference>
<dbReference type="RNAct" id="Q9HBX8">
    <property type="molecule type" value="protein"/>
</dbReference>
<dbReference type="Bgee" id="ENSG00000133067">
    <property type="expression patterns" value="Expressed in right coronary artery and 142 other cell types or tissues"/>
</dbReference>
<dbReference type="ExpressionAtlas" id="Q9HBX8">
    <property type="expression patterns" value="baseline and differential"/>
</dbReference>
<dbReference type="GO" id="GO:0005886">
    <property type="term" value="C:plasma membrane"/>
    <property type="evidence" value="ECO:0000250"/>
    <property type="project" value="UniProtKB"/>
</dbReference>
<dbReference type="GO" id="GO:0032588">
    <property type="term" value="C:trans-Golgi network membrane"/>
    <property type="evidence" value="ECO:0000250"/>
    <property type="project" value="UniProtKB"/>
</dbReference>
<dbReference type="GO" id="GO:0031982">
    <property type="term" value="C:vesicle"/>
    <property type="evidence" value="ECO:0000314"/>
    <property type="project" value="UniProtKB"/>
</dbReference>
<dbReference type="GO" id="GO:0008201">
    <property type="term" value="F:heparin binding"/>
    <property type="evidence" value="ECO:0000318"/>
    <property type="project" value="GO_Central"/>
</dbReference>
<dbReference type="GO" id="GO:0016500">
    <property type="term" value="F:protein-hormone receptor activity"/>
    <property type="evidence" value="ECO:0007669"/>
    <property type="project" value="InterPro"/>
</dbReference>
<dbReference type="GO" id="GO:0048495">
    <property type="term" value="F:Roundabout binding"/>
    <property type="evidence" value="ECO:0000318"/>
    <property type="project" value="GO_Central"/>
</dbReference>
<dbReference type="GO" id="GO:0004888">
    <property type="term" value="F:transmembrane signaling receptor activity"/>
    <property type="evidence" value="ECO:0000250"/>
    <property type="project" value="UniProtKB"/>
</dbReference>
<dbReference type="GO" id="GO:1990523">
    <property type="term" value="P:bone regeneration"/>
    <property type="evidence" value="ECO:0007669"/>
    <property type="project" value="Ensembl"/>
</dbReference>
<dbReference type="GO" id="GO:0008283">
    <property type="term" value="P:cell population proliferation"/>
    <property type="evidence" value="ECO:0007669"/>
    <property type="project" value="Ensembl"/>
</dbReference>
<dbReference type="GO" id="GO:0007186">
    <property type="term" value="P:G protein-coupled receptor signaling pathway"/>
    <property type="evidence" value="ECO:0007669"/>
    <property type="project" value="UniProtKB-KW"/>
</dbReference>
<dbReference type="GO" id="GO:0050919">
    <property type="term" value="P:negative chemotaxis"/>
    <property type="evidence" value="ECO:0000318"/>
    <property type="project" value="GO_Central"/>
</dbReference>
<dbReference type="GO" id="GO:0090263">
    <property type="term" value="P:positive regulation of canonical Wnt signaling pathway"/>
    <property type="evidence" value="ECO:0000250"/>
    <property type="project" value="UniProtKB"/>
</dbReference>
<dbReference type="GO" id="GO:0030335">
    <property type="term" value="P:positive regulation of cell migration"/>
    <property type="evidence" value="ECO:0000314"/>
    <property type="project" value="UniProtKB"/>
</dbReference>
<dbReference type="GO" id="GO:0030177">
    <property type="term" value="P:positive regulation of Wnt signaling pathway"/>
    <property type="evidence" value="ECO:0000314"/>
    <property type="project" value="UniProtKB"/>
</dbReference>
<dbReference type="GO" id="GO:0016055">
    <property type="term" value="P:Wnt signaling pathway"/>
    <property type="evidence" value="ECO:0007669"/>
    <property type="project" value="UniProtKB-KW"/>
</dbReference>
<dbReference type="CDD" id="cd15362">
    <property type="entry name" value="7tmA_LGR6"/>
    <property type="match status" value="1"/>
</dbReference>
<dbReference type="FunFam" id="1.20.1070.10:FF:000028">
    <property type="entry name" value="leucine-rich repeat-containing G-protein coupled receptor 4 isoform X1"/>
    <property type="match status" value="1"/>
</dbReference>
<dbReference type="FunFam" id="3.80.10.10:FF:000028">
    <property type="entry name" value="leucine-rich repeat-containing G-protein coupled receptor 4 isoform X1"/>
    <property type="match status" value="1"/>
</dbReference>
<dbReference type="Gene3D" id="1.20.1070.10">
    <property type="entry name" value="Rhodopsin 7-helix transmembrane proteins"/>
    <property type="match status" value="1"/>
</dbReference>
<dbReference type="Gene3D" id="3.80.10.10">
    <property type="entry name" value="Ribonuclease Inhibitor"/>
    <property type="match status" value="1"/>
</dbReference>
<dbReference type="InterPro" id="IPR000276">
    <property type="entry name" value="GPCR_Rhodpsn"/>
</dbReference>
<dbReference type="InterPro" id="IPR002131">
    <property type="entry name" value="Gphrmn_rcpt_fam"/>
</dbReference>
<dbReference type="InterPro" id="IPR001611">
    <property type="entry name" value="Leu-rich_rpt"/>
</dbReference>
<dbReference type="InterPro" id="IPR003591">
    <property type="entry name" value="Leu-rich_rpt_typical-subtyp"/>
</dbReference>
<dbReference type="InterPro" id="IPR032675">
    <property type="entry name" value="LRR_dom_sf"/>
</dbReference>
<dbReference type="InterPro" id="IPR000372">
    <property type="entry name" value="LRRNT"/>
</dbReference>
<dbReference type="PANTHER" id="PTHR24372">
    <property type="entry name" value="GLYCOPROTEIN HORMONE RECEPTOR"/>
    <property type="match status" value="1"/>
</dbReference>
<dbReference type="PANTHER" id="PTHR24372:SF73">
    <property type="entry name" value="LEUCINE RICH REPEAT CONTAINING G PROTEIN-COUPLED RECEPTOR 6"/>
    <property type="match status" value="1"/>
</dbReference>
<dbReference type="Pfam" id="PF13855">
    <property type="entry name" value="LRR_8"/>
    <property type="match status" value="4"/>
</dbReference>
<dbReference type="PRINTS" id="PR00373">
    <property type="entry name" value="GLYCHORMONER"/>
</dbReference>
<dbReference type="PRINTS" id="PR00237">
    <property type="entry name" value="GPCRRHODOPSN"/>
</dbReference>
<dbReference type="SMART" id="SM00364">
    <property type="entry name" value="LRR_BAC"/>
    <property type="match status" value="7"/>
</dbReference>
<dbReference type="SMART" id="SM00365">
    <property type="entry name" value="LRR_SD22"/>
    <property type="match status" value="5"/>
</dbReference>
<dbReference type="SMART" id="SM00369">
    <property type="entry name" value="LRR_TYP"/>
    <property type="match status" value="14"/>
</dbReference>
<dbReference type="SMART" id="SM00013">
    <property type="entry name" value="LRRNT"/>
    <property type="match status" value="1"/>
</dbReference>
<dbReference type="SUPFAM" id="SSF81321">
    <property type="entry name" value="Family A G protein-coupled receptor-like"/>
    <property type="match status" value="1"/>
</dbReference>
<dbReference type="SUPFAM" id="SSF52058">
    <property type="entry name" value="L domain-like"/>
    <property type="match status" value="1"/>
</dbReference>
<dbReference type="SUPFAM" id="SSF52047">
    <property type="entry name" value="RNI-like"/>
    <property type="match status" value="1"/>
</dbReference>
<dbReference type="PROSITE" id="PS51450">
    <property type="entry name" value="LRR"/>
    <property type="match status" value="13"/>
</dbReference>
<organism>
    <name type="scientific">Homo sapiens</name>
    <name type="common">Human</name>
    <dbReference type="NCBI Taxonomy" id="9606"/>
    <lineage>
        <taxon>Eukaryota</taxon>
        <taxon>Metazoa</taxon>
        <taxon>Chordata</taxon>
        <taxon>Craniata</taxon>
        <taxon>Vertebrata</taxon>
        <taxon>Euteleostomi</taxon>
        <taxon>Mammalia</taxon>
        <taxon>Eutheria</taxon>
        <taxon>Euarchontoglires</taxon>
        <taxon>Primates</taxon>
        <taxon>Haplorrhini</taxon>
        <taxon>Catarrhini</taxon>
        <taxon>Hominidae</taxon>
        <taxon>Homo</taxon>
    </lineage>
</organism>
<comment type="function">
    <text evidence="5 6">Receptor for R-spondins that potentiates the canonical Wnt signaling pathway and acts as a marker of multipotent stem cells in the epidermis. Upon binding to R-spondins (RSPO1, RSPO2, RSPO3 or RSPO4), associates with phosphorylated LRP6 and frizzled receptors that are activated by extracellular Wnt receptors, triggering the canonical Wnt signaling pathway to increase expression of target genes. In contrast to classical G-protein coupled receptors, does not activate heterotrimeric G-proteins to transduce the signal. May act as a tumor suppressor.</text>
</comment>
<comment type="subcellular location">
    <subcellularLocation>
        <location evidence="6">Cell membrane</location>
        <topology evidence="6">Multi-pass membrane protein</topology>
    </subcellularLocation>
</comment>
<comment type="alternative products">
    <event type="alternative splicing"/>
    <isoform>
        <id>Q9HBX8-3</id>
        <name>3</name>
        <sequence type="displayed"/>
    </isoform>
    <isoform>
        <id>Q9HBX8-1</id>
        <name>1</name>
        <sequence type="described" ref="VSP_028006 VSP_028007"/>
    </isoform>
    <isoform>
        <id>Q9HBX8-2</id>
        <name>2</name>
        <sequence type="described" ref="VSP_013596"/>
    </isoform>
</comment>
<comment type="similarity">
    <text evidence="11">Belongs to the G-protein coupled receptor 1 family.</text>
</comment>
<comment type="sequence caution" evidence="11">
    <conflict type="erroneous initiation">
        <sequence resource="EMBL-CDS" id="BAB55071"/>
    </conflict>
    <text>Truncated N-terminus.</text>
</comment>
<name>LGR6_HUMAN</name>